<reference key="1">
    <citation type="journal article" date="2008" name="J. Bacteriol.">
        <title>Complete genome sequence of Neisseria gonorrhoeae NCCP11945.</title>
        <authorList>
            <person name="Chung G.T."/>
            <person name="Yoo J.S."/>
            <person name="Oh H.B."/>
            <person name="Lee Y.S."/>
            <person name="Cha S.H."/>
            <person name="Kim S.J."/>
            <person name="Yoo C.K."/>
        </authorList>
    </citation>
    <scope>NUCLEOTIDE SEQUENCE [LARGE SCALE GENOMIC DNA]</scope>
    <source>
        <strain>NCCP11945</strain>
    </source>
</reference>
<dbReference type="EMBL" id="CP001050">
    <property type="protein sequence ID" value="ACF29084.1"/>
    <property type="molecule type" value="Genomic_DNA"/>
</dbReference>
<dbReference type="RefSeq" id="WP_002241285.1">
    <property type="nucleotide sequence ID" value="NC_011035.1"/>
</dbReference>
<dbReference type="SMR" id="B4RJT3"/>
<dbReference type="GeneID" id="66752591"/>
<dbReference type="KEGG" id="ngk:NGK_0393"/>
<dbReference type="HOGENOM" id="CLU_087843_4_1_4"/>
<dbReference type="Proteomes" id="UP000002564">
    <property type="component" value="Chromosome"/>
</dbReference>
<dbReference type="GO" id="GO:0005829">
    <property type="term" value="C:cytosol"/>
    <property type="evidence" value="ECO:0007669"/>
    <property type="project" value="TreeGrafter"/>
</dbReference>
<dbReference type="GO" id="GO:0003723">
    <property type="term" value="F:RNA binding"/>
    <property type="evidence" value="ECO:0007669"/>
    <property type="project" value="UniProtKB-UniRule"/>
</dbReference>
<dbReference type="GO" id="GO:0006353">
    <property type="term" value="P:DNA-templated transcription termination"/>
    <property type="evidence" value="ECO:0007669"/>
    <property type="project" value="UniProtKB-UniRule"/>
</dbReference>
<dbReference type="GO" id="GO:0031564">
    <property type="term" value="P:transcription antitermination"/>
    <property type="evidence" value="ECO:0007669"/>
    <property type="project" value="UniProtKB-KW"/>
</dbReference>
<dbReference type="FunFam" id="1.10.940.10:FF:000010">
    <property type="entry name" value="Transcription antitermination protein NusB"/>
    <property type="match status" value="1"/>
</dbReference>
<dbReference type="Gene3D" id="1.10.940.10">
    <property type="entry name" value="NusB-like"/>
    <property type="match status" value="1"/>
</dbReference>
<dbReference type="HAMAP" id="MF_00073">
    <property type="entry name" value="NusB"/>
    <property type="match status" value="1"/>
</dbReference>
<dbReference type="InterPro" id="IPR035926">
    <property type="entry name" value="NusB-like_sf"/>
</dbReference>
<dbReference type="InterPro" id="IPR011605">
    <property type="entry name" value="NusB_fam"/>
</dbReference>
<dbReference type="InterPro" id="IPR006027">
    <property type="entry name" value="NusB_RsmB_TIM44"/>
</dbReference>
<dbReference type="NCBIfam" id="TIGR01951">
    <property type="entry name" value="nusB"/>
    <property type="match status" value="1"/>
</dbReference>
<dbReference type="PANTHER" id="PTHR11078:SF3">
    <property type="entry name" value="ANTITERMINATION NUSB DOMAIN-CONTAINING PROTEIN"/>
    <property type="match status" value="1"/>
</dbReference>
<dbReference type="PANTHER" id="PTHR11078">
    <property type="entry name" value="N UTILIZATION SUBSTANCE PROTEIN B-RELATED"/>
    <property type="match status" value="1"/>
</dbReference>
<dbReference type="Pfam" id="PF01029">
    <property type="entry name" value="NusB"/>
    <property type="match status" value="1"/>
</dbReference>
<dbReference type="SUPFAM" id="SSF48013">
    <property type="entry name" value="NusB-like"/>
    <property type="match status" value="1"/>
</dbReference>
<sequence length="141" mass="15997">MKTARRRSRELAVQAVYQSLINRTAAPEIAKNIREMSDFAKADEELFNKLFFGTQTNAADYIQKIRPLLDRDEKDLNPIERAVLLTACHELSAMPETPYPVIINEAIEVTKTFGGTDGHKFVNGILDKLAAQIRPDEPKRR</sequence>
<gene>
    <name evidence="1" type="primary">nusB</name>
    <name type="ordered locus">NGK_0393</name>
</gene>
<name>NUSB_NEIG2</name>
<proteinExistence type="inferred from homology"/>
<evidence type="ECO:0000255" key="1">
    <source>
        <dbReference type="HAMAP-Rule" id="MF_00073"/>
    </source>
</evidence>
<feature type="chain" id="PRO_1000092568" description="Transcription antitermination protein NusB">
    <location>
        <begin position="1"/>
        <end position="141"/>
    </location>
</feature>
<protein>
    <recommendedName>
        <fullName evidence="1">Transcription antitermination protein NusB</fullName>
    </recommendedName>
    <alternativeName>
        <fullName evidence="1">Antitermination factor NusB</fullName>
    </alternativeName>
</protein>
<comment type="function">
    <text evidence="1">Involved in transcription antitermination. Required for transcription of ribosomal RNA (rRNA) genes. Binds specifically to the boxA antiterminator sequence of the ribosomal RNA (rrn) operons.</text>
</comment>
<comment type="similarity">
    <text evidence="1">Belongs to the NusB family.</text>
</comment>
<organism>
    <name type="scientific">Neisseria gonorrhoeae (strain NCCP11945)</name>
    <dbReference type="NCBI Taxonomy" id="521006"/>
    <lineage>
        <taxon>Bacteria</taxon>
        <taxon>Pseudomonadati</taxon>
        <taxon>Pseudomonadota</taxon>
        <taxon>Betaproteobacteria</taxon>
        <taxon>Neisseriales</taxon>
        <taxon>Neisseriaceae</taxon>
        <taxon>Neisseria</taxon>
    </lineage>
</organism>
<accession>B4RJT3</accession>
<keyword id="KW-0694">RNA-binding</keyword>
<keyword id="KW-0804">Transcription</keyword>
<keyword id="KW-0889">Transcription antitermination</keyword>
<keyword id="KW-0805">Transcription regulation</keyword>